<accession>P9WII8</accession>
<accession>L0TCW3</accession>
<accession>O06208</accession>
<accession>P60796</accession>
<evidence type="ECO:0000255" key="1">
    <source>
        <dbReference type="HAMAP-Rule" id="MF_01824"/>
    </source>
</evidence>
<evidence type="ECO:0000305" key="2"/>
<reference key="1">
    <citation type="journal article" date="2002" name="J. Bacteriol.">
        <title>Whole-genome comparison of Mycobacterium tuberculosis clinical and laboratory strains.</title>
        <authorList>
            <person name="Fleischmann R.D."/>
            <person name="Alland D."/>
            <person name="Eisen J.A."/>
            <person name="Carpenter L."/>
            <person name="White O."/>
            <person name="Peterson J.D."/>
            <person name="DeBoy R.T."/>
            <person name="Dodson R.J."/>
            <person name="Gwinn M.L."/>
            <person name="Haft D.H."/>
            <person name="Hickey E.K."/>
            <person name="Kolonay J.F."/>
            <person name="Nelson W.C."/>
            <person name="Umayam L.A."/>
            <person name="Ermolaeva M.D."/>
            <person name="Salzberg S.L."/>
            <person name="Delcher A."/>
            <person name="Utterback T.R."/>
            <person name="Weidman J.F."/>
            <person name="Khouri H.M."/>
            <person name="Gill J."/>
            <person name="Mikula A."/>
            <person name="Bishai W."/>
            <person name="Jacobs W.R. Jr."/>
            <person name="Venter J.C."/>
            <person name="Fraser C.M."/>
        </authorList>
    </citation>
    <scope>NUCLEOTIDE SEQUENCE [LARGE SCALE GENOMIC DNA]</scope>
    <source>
        <strain>CDC 1551 / Oshkosh</strain>
    </source>
</reference>
<keyword id="KW-0456">Lyase</keyword>
<keyword id="KW-0663">Pyridoxal phosphate</keyword>
<keyword id="KW-1185">Reference proteome</keyword>
<keyword id="KW-0704">Schiff base</keyword>
<sequence>MDPAGNPATGTARVKRGMAEMLKGGVIMDVVTPEQARIAEGAGAVAVMALERVPADIRAQGGVSRMSDPDMIEGIIAAVTIPVMAKVRIGHFVEAQILQTLGVDYIDESEVLTPADYAHHIDKWNFTVPFVCGATNLGEALRRISEGAAMIRSKGEAGTGDVSNATTHMRAIGGEIRRLTSMSEDELFVAAKELQAPYELVAEVARAGKLPVTLFTAGGIATPADAAMMMQLGAEGVFVGSGIFKSGAPEHRAAAIVKATTFFDDPDVLAKVSRGLGEAMVGINVDEIAVGHRLAQRGW</sequence>
<feature type="chain" id="PRO_0000427999" description="Pyridoxal 5'-phosphate synthase subunit PdxS">
    <location>
        <begin position="1"/>
        <end position="299"/>
    </location>
</feature>
<feature type="active site" description="Schiff-base intermediate with D-ribose 5-phosphate" evidence="1">
    <location>
        <position position="86"/>
    </location>
</feature>
<feature type="binding site" evidence="1">
    <location>
        <position position="29"/>
    </location>
    <ligand>
        <name>D-ribose 5-phosphate</name>
        <dbReference type="ChEBI" id="CHEBI:78346"/>
    </ligand>
</feature>
<feature type="binding site" evidence="1">
    <location>
        <position position="158"/>
    </location>
    <ligand>
        <name>D-ribose 5-phosphate</name>
        <dbReference type="ChEBI" id="CHEBI:78346"/>
    </ligand>
</feature>
<feature type="binding site" evidence="1">
    <location>
        <position position="170"/>
    </location>
    <ligand>
        <name>D-glyceraldehyde 3-phosphate</name>
        <dbReference type="ChEBI" id="CHEBI:59776"/>
    </ligand>
</feature>
<feature type="binding site" evidence="1">
    <location>
        <position position="219"/>
    </location>
    <ligand>
        <name>D-ribose 5-phosphate</name>
        <dbReference type="ChEBI" id="CHEBI:78346"/>
    </ligand>
</feature>
<feature type="binding site" evidence="1">
    <location>
        <begin position="240"/>
        <end position="241"/>
    </location>
    <ligand>
        <name>D-ribose 5-phosphate</name>
        <dbReference type="ChEBI" id="CHEBI:78346"/>
    </ligand>
</feature>
<name>PDXS_MYCTO</name>
<dbReference type="EC" id="4.3.3.6" evidence="1"/>
<dbReference type="EMBL" id="AE000516">
    <property type="protein sequence ID" value="AAK46997.1"/>
    <property type="status" value="ALT_INIT"/>
    <property type="molecule type" value="Genomic_DNA"/>
</dbReference>
<dbReference type="PIR" id="E70570">
    <property type="entry name" value="E70570"/>
</dbReference>
<dbReference type="RefSeq" id="WP_003413468.1">
    <property type="nucleotide sequence ID" value="NZ_KK341227.1"/>
</dbReference>
<dbReference type="SMR" id="P9WII8"/>
<dbReference type="GeneID" id="45426609"/>
<dbReference type="KEGG" id="mtc:MT2681"/>
<dbReference type="PATRIC" id="fig|83331.31.peg.2891"/>
<dbReference type="HOGENOM" id="CLU_055352_1_0_11"/>
<dbReference type="UniPathway" id="UPA00245"/>
<dbReference type="Proteomes" id="UP000001020">
    <property type="component" value="Chromosome"/>
</dbReference>
<dbReference type="GO" id="GO:0036381">
    <property type="term" value="F:pyridoxal 5'-phosphate synthase (glutamine hydrolysing) activity"/>
    <property type="evidence" value="ECO:0007669"/>
    <property type="project" value="UniProtKB-UniRule"/>
</dbReference>
<dbReference type="GO" id="GO:0006520">
    <property type="term" value="P:amino acid metabolic process"/>
    <property type="evidence" value="ECO:0007669"/>
    <property type="project" value="TreeGrafter"/>
</dbReference>
<dbReference type="GO" id="GO:0042823">
    <property type="term" value="P:pyridoxal phosphate biosynthetic process"/>
    <property type="evidence" value="ECO:0007669"/>
    <property type="project" value="UniProtKB-UniRule"/>
</dbReference>
<dbReference type="GO" id="GO:0008615">
    <property type="term" value="P:pyridoxine biosynthetic process"/>
    <property type="evidence" value="ECO:0007669"/>
    <property type="project" value="TreeGrafter"/>
</dbReference>
<dbReference type="CDD" id="cd04727">
    <property type="entry name" value="pdxS"/>
    <property type="match status" value="1"/>
</dbReference>
<dbReference type="FunFam" id="3.20.20.70:FF:000001">
    <property type="entry name" value="Pyridoxine biosynthesis protein PDX1"/>
    <property type="match status" value="1"/>
</dbReference>
<dbReference type="Gene3D" id="3.20.20.70">
    <property type="entry name" value="Aldolase class I"/>
    <property type="match status" value="1"/>
</dbReference>
<dbReference type="HAMAP" id="MF_01824">
    <property type="entry name" value="PdxS"/>
    <property type="match status" value="1"/>
</dbReference>
<dbReference type="InterPro" id="IPR013785">
    <property type="entry name" value="Aldolase_TIM"/>
</dbReference>
<dbReference type="InterPro" id="IPR001852">
    <property type="entry name" value="PdxS/SNZ"/>
</dbReference>
<dbReference type="InterPro" id="IPR033755">
    <property type="entry name" value="PdxS/SNZ_N"/>
</dbReference>
<dbReference type="InterPro" id="IPR011060">
    <property type="entry name" value="RibuloseP-bd_barrel"/>
</dbReference>
<dbReference type="NCBIfam" id="NF003215">
    <property type="entry name" value="PRK04180.1"/>
    <property type="match status" value="1"/>
</dbReference>
<dbReference type="NCBIfam" id="TIGR00343">
    <property type="entry name" value="pyridoxal 5'-phosphate synthase lyase subunit PdxS"/>
    <property type="match status" value="1"/>
</dbReference>
<dbReference type="PANTHER" id="PTHR31829">
    <property type="entry name" value="PYRIDOXAL 5'-PHOSPHATE SYNTHASE SUBUNIT SNZ1-RELATED"/>
    <property type="match status" value="1"/>
</dbReference>
<dbReference type="PANTHER" id="PTHR31829:SF0">
    <property type="entry name" value="PYRIDOXAL 5'-PHOSPHATE SYNTHASE SUBUNIT SNZ1-RELATED"/>
    <property type="match status" value="1"/>
</dbReference>
<dbReference type="Pfam" id="PF01680">
    <property type="entry name" value="SOR_SNZ"/>
    <property type="match status" value="1"/>
</dbReference>
<dbReference type="PIRSF" id="PIRSF029271">
    <property type="entry name" value="Pdx1"/>
    <property type="match status" value="1"/>
</dbReference>
<dbReference type="SUPFAM" id="SSF51366">
    <property type="entry name" value="Ribulose-phoshate binding barrel"/>
    <property type="match status" value="1"/>
</dbReference>
<dbReference type="PROSITE" id="PS01235">
    <property type="entry name" value="PDXS_SNZ_1"/>
    <property type="match status" value="1"/>
</dbReference>
<dbReference type="PROSITE" id="PS51129">
    <property type="entry name" value="PDXS_SNZ_2"/>
    <property type="match status" value="1"/>
</dbReference>
<organism>
    <name type="scientific">Mycobacterium tuberculosis (strain CDC 1551 / Oshkosh)</name>
    <dbReference type="NCBI Taxonomy" id="83331"/>
    <lineage>
        <taxon>Bacteria</taxon>
        <taxon>Bacillati</taxon>
        <taxon>Actinomycetota</taxon>
        <taxon>Actinomycetes</taxon>
        <taxon>Mycobacteriales</taxon>
        <taxon>Mycobacteriaceae</taxon>
        <taxon>Mycobacterium</taxon>
        <taxon>Mycobacterium tuberculosis complex</taxon>
    </lineage>
</organism>
<protein>
    <recommendedName>
        <fullName evidence="1">Pyridoxal 5'-phosphate synthase subunit PdxS</fullName>
        <shortName evidence="1">PLP synthase subunit PdxS</shortName>
        <ecNumber evidence="1">4.3.3.6</ecNumber>
    </recommendedName>
    <alternativeName>
        <fullName evidence="1">Pdx1</fullName>
    </alternativeName>
</protein>
<comment type="function">
    <text evidence="1">Catalyzes the formation of pyridoxal 5'-phosphate from ribose 5-phosphate (RBP), glyceraldehyde 3-phosphate (G3P) and ammonia. The ammonia is provided by the PdxT subunit. Can also use ribulose 5-phosphate and dihydroxyacetone phosphate as substrates, resulting from enzyme-catalyzed isomerization of RBP and G3P, respectively.</text>
</comment>
<comment type="catalytic activity">
    <reaction evidence="1">
        <text>aldehydo-D-ribose 5-phosphate + D-glyceraldehyde 3-phosphate + L-glutamine = pyridoxal 5'-phosphate + L-glutamate + phosphate + 3 H2O + H(+)</text>
        <dbReference type="Rhea" id="RHEA:31507"/>
        <dbReference type="ChEBI" id="CHEBI:15377"/>
        <dbReference type="ChEBI" id="CHEBI:15378"/>
        <dbReference type="ChEBI" id="CHEBI:29985"/>
        <dbReference type="ChEBI" id="CHEBI:43474"/>
        <dbReference type="ChEBI" id="CHEBI:58273"/>
        <dbReference type="ChEBI" id="CHEBI:58359"/>
        <dbReference type="ChEBI" id="CHEBI:59776"/>
        <dbReference type="ChEBI" id="CHEBI:597326"/>
        <dbReference type="EC" id="4.3.3.6"/>
    </reaction>
</comment>
<comment type="pathway">
    <text evidence="1">Cofactor biosynthesis; pyridoxal 5'-phosphate biosynthesis.</text>
</comment>
<comment type="subunit">
    <text evidence="1">In the presence of PdxT, forms a dodecamer of heterodimers.</text>
</comment>
<comment type="similarity">
    <text evidence="1">Belongs to the PdxS/SNZ family.</text>
</comment>
<comment type="sequence caution" evidence="2">
    <conflict type="erroneous initiation">
        <sequence resource="EMBL-CDS" id="AAK46997"/>
    </conflict>
</comment>
<gene>
    <name evidence="1" type="primary">pdxS</name>
    <name type="ordered locus">MT2681</name>
</gene>
<proteinExistence type="inferred from homology"/>